<feature type="chain" id="PRO_1000147501" description="Bifunctional protein FolD">
    <location>
        <begin position="1"/>
        <end position="292"/>
    </location>
</feature>
<feature type="binding site" evidence="1">
    <location>
        <begin position="169"/>
        <end position="171"/>
    </location>
    <ligand>
        <name>NADP(+)</name>
        <dbReference type="ChEBI" id="CHEBI:58349"/>
    </ligand>
</feature>
<feature type="binding site" evidence="1">
    <location>
        <position position="194"/>
    </location>
    <ligand>
        <name>NADP(+)</name>
        <dbReference type="ChEBI" id="CHEBI:58349"/>
    </ligand>
</feature>
<evidence type="ECO:0000255" key="1">
    <source>
        <dbReference type="HAMAP-Rule" id="MF_01576"/>
    </source>
</evidence>
<protein>
    <recommendedName>
        <fullName evidence="1">Bifunctional protein FolD</fullName>
    </recommendedName>
    <domain>
        <recommendedName>
            <fullName evidence="1">Methylenetetrahydrofolate dehydrogenase</fullName>
            <ecNumber evidence="1">1.5.1.5</ecNumber>
        </recommendedName>
    </domain>
    <domain>
        <recommendedName>
            <fullName evidence="1">Methenyltetrahydrofolate cyclohydrolase</fullName>
            <ecNumber evidence="1">3.5.4.9</ecNumber>
        </recommendedName>
    </domain>
</protein>
<keyword id="KW-0028">Amino-acid biosynthesis</keyword>
<keyword id="KW-0368">Histidine biosynthesis</keyword>
<keyword id="KW-0378">Hydrolase</keyword>
<keyword id="KW-0486">Methionine biosynthesis</keyword>
<keyword id="KW-0511">Multifunctional enzyme</keyword>
<keyword id="KW-0521">NADP</keyword>
<keyword id="KW-0554">One-carbon metabolism</keyword>
<keyword id="KW-0560">Oxidoreductase</keyword>
<keyword id="KW-0658">Purine biosynthesis</keyword>
<keyword id="KW-1185">Reference proteome</keyword>
<proteinExistence type="inferred from homology"/>
<name>FOLD_NOSP7</name>
<organism>
    <name type="scientific">Nostoc punctiforme (strain ATCC 29133 / PCC 73102)</name>
    <dbReference type="NCBI Taxonomy" id="63737"/>
    <lineage>
        <taxon>Bacteria</taxon>
        <taxon>Bacillati</taxon>
        <taxon>Cyanobacteriota</taxon>
        <taxon>Cyanophyceae</taxon>
        <taxon>Nostocales</taxon>
        <taxon>Nostocaceae</taxon>
        <taxon>Nostoc</taxon>
    </lineage>
</organism>
<comment type="function">
    <text evidence="1">Catalyzes the oxidation of 5,10-methylenetetrahydrofolate to 5,10-methenyltetrahydrofolate and then the hydrolysis of 5,10-methenyltetrahydrofolate to 10-formyltetrahydrofolate.</text>
</comment>
<comment type="catalytic activity">
    <reaction evidence="1">
        <text>(6R)-5,10-methylene-5,6,7,8-tetrahydrofolate + NADP(+) = (6R)-5,10-methenyltetrahydrofolate + NADPH</text>
        <dbReference type="Rhea" id="RHEA:22812"/>
        <dbReference type="ChEBI" id="CHEBI:15636"/>
        <dbReference type="ChEBI" id="CHEBI:57455"/>
        <dbReference type="ChEBI" id="CHEBI:57783"/>
        <dbReference type="ChEBI" id="CHEBI:58349"/>
        <dbReference type="EC" id="1.5.1.5"/>
    </reaction>
</comment>
<comment type="catalytic activity">
    <reaction evidence="1">
        <text>(6R)-5,10-methenyltetrahydrofolate + H2O = (6R)-10-formyltetrahydrofolate + H(+)</text>
        <dbReference type="Rhea" id="RHEA:23700"/>
        <dbReference type="ChEBI" id="CHEBI:15377"/>
        <dbReference type="ChEBI" id="CHEBI:15378"/>
        <dbReference type="ChEBI" id="CHEBI:57455"/>
        <dbReference type="ChEBI" id="CHEBI:195366"/>
        <dbReference type="EC" id="3.5.4.9"/>
    </reaction>
</comment>
<comment type="pathway">
    <text evidence="1">One-carbon metabolism; tetrahydrofolate interconversion.</text>
</comment>
<comment type="subunit">
    <text evidence="1">Homodimer.</text>
</comment>
<comment type="similarity">
    <text evidence="1">Belongs to the tetrahydrofolate dehydrogenase/cyclohydrolase family.</text>
</comment>
<sequence length="292" mass="30829">METKTAKLLDGKAIAAKIQQELSVAITQLQPEIGRPPGLAVLMVGDNPASAAYVRNKEKACAKVGIASFGKHFPAETTFRELEKVIAALNDDERVDGILVQLPLPDHLDAVALLHQIDPDKDADGLHPVNLGRLVRGEIGLRSCTPDGVMRLLQEYEIPLQGKQAVVVGRSILVGKPMALMLLEADATVTIAHSRSHDLKSITQNADILIAAAGRPGLITADMVKPGAVVVDVGMNRVTDASGKSRLIGDVDFESTAGVAGFITPVPGGVGPMTVAILLQNTFTSYSRAAKK</sequence>
<dbReference type="EC" id="1.5.1.5" evidence="1"/>
<dbReference type="EC" id="3.5.4.9" evidence="1"/>
<dbReference type="EMBL" id="CP001037">
    <property type="protein sequence ID" value="ACC82154.1"/>
    <property type="molecule type" value="Genomic_DNA"/>
</dbReference>
<dbReference type="RefSeq" id="WP_012410125.1">
    <property type="nucleotide sequence ID" value="NC_010628.1"/>
</dbReference>
<dbReference type="SMR" id="B2J442"/>
<dbReference type="STRING" id="63737.Npun_F3769"/>
<dbReference type="EnsemblBacteria" id="ACC82154">
    <property type="protein sequence ID" value="ACC82154"/>
    <property type="gene ID" value="Npun_F3769"/>
</dbReference>
<dbReference type="KEGG" id="npu:Npun_F3769"/>
<dbReference type="eggNOG" id="COG0190">
    <property type="taxonomic scope" value="Bacteria"/>
</dbReference>
<dbReference type="HOGENOM" id="CLU_034045_2_1_3"/>
<dbReference type="OrthoDB" id="9803580at2"/>
<dbReference type="PhylomeDB" id="B2J442"/>
<dbReference type="UniPathway" id="UPA00193"/>
<dbReference type="Proteomes" id="UP000001191">
    <property type="component" value="Chromosome"/>
</dbReference>
<dbReference type="GO" id="GO:0005829">
    <property type="term" value="C:cytosol"/>
    <property type="evidence" value="ECO:0007669"/>
    <property type="project" value="TreeGrafter"/>
</dbReference>
<dbReference type="GO" id="GO:0004477">
    <property type="term" value="F:methenyltetrahydrofolate cyclohydrolase activity"/>
    <property type="evidence" value="ECO:0007669"/>
    <property type="project" value="UniProtKB-UniRule"/>
</dbReference>
<dbReference type="GO" id="GO:0004488">
    <property type="term" value="F:methylenetetrahydrofolate dehydrogenase (NADP+) activity"/>
    <property type="evidence" value="ECO:0007669"/>
    <property type="project" value="UniProtKB-UniRule"/>
</dbReference>
<dbReference type="GO" id="GO:0000105">
    <property type="term" value="P:L-histidine biosynthetic process"/>
    <property type="evidence" value="ECO:0007669"/>
    <property type="project" value="UniProtKB-KW"/>
</dbReference>
<dbReference type="GO" id="GO:0009086">
    <property type="term" value="P:methionine biosynthetic process"/>
    <property type="evidence" value="ECO:0007669"/>
    <property type="project" value="UniProtKB-KW"/>
</dbReference>
<dbReference type="GO" id="GO:0006164">
    <property type="term" value="P:purine nucleotide biosynthetic process"/>
    <property type="evidence" value="ECO:0007669"/>
    <property type="project" value="UniProtKB-KW"/>
</dbReference>
<dbReference type="GO" id="GO:0035999">
    <property type="term" value="P:tetrahydrofolate interconversion"/>
    <property type="evidence" value="ECO:0007669"/>
    <property type="project" value="UniProtKB-UniRule"/>
</dbReference>
<dbReference type="CDD" id="cd01080">
    <property type="entry name" value="NAD_bind_m-THF_DH_Cyclohyd"/>
    <property type="match status" value="1"/>
</dbReference>
<dbReference type="FunFam" id="3.40.50.720:FF:000189">
    <property type="entry name" value="Bifunctional protein FolD"/>
    <property type="match status" value="1"/>
</dbReference>
<dbReference type="FunFam" id="3.40.50.10860:FF:000005">
    <property type="entry name" value="C-1-tetrahydrofolate synthase, cytoplasmic, putative"/>
    <property type="match status" value="1"/>
</dbReference>
<dbReference type="Gene3D" id="3.40.50.10860">
    <property type="entry name" value="Leucine Dehydrogenase, chain A, domain 1"/>
    <property type="match status" value="1"/>
</dbReference>
<dbReference type="Gene3D" id="3.40.50.720">
    <property type="entry name" value="NAD(P)-binding Rossmann-like Domain"/>
    <property type="match status" value="1"/>
</dbReference>
<dbReference type="HAMAP" id="MF_01576">
    <property type="entry name" value="THF_DHG_CYH"/>
    <property type="match status" value="1"/>
</dbReference>
<dbReference type="InterPro" id="IPR046346">
    <property type="entry name" value="Aminoacid_DH-like_N_sf"/>
</dbReference>
<dbReference type="InterPro" id="IPR036291">
    <property type="entry name" value="NAD(P)-bd_dom_sf"/>
</dbReference>
<dbReference type="InterPro" id="IPR000672">
    <property type="entry name" value="THF_DH/CycHdrlase"/>
</dbReference>
<dbReference type="InterPro" id="IPR020630">
    <property type="entry name" value="THF_DH/CycHdrlase_cat_dom"/>
</dbReference>
<dbReference type="InterPro" id="IPR020867">
    <property type="entry name" value="THF_DH/CycHdrlase_CS"/>
</dbReference>
<dbReference type="InterPro" id="IPR020631">
    <property type="entry name" value="THF_DH/CycHdrlase_NAD-bd_dom"/>
</dbReference>
<dbReference type="NCBIfam" id="NF008058">
    <property type="entry name" value="PRK10792.1"/>
    <property type="match status" value="1"/>
</dbReference>
<dbReference type="NCBIfam" id="NF010783">
    <property type="entry name" value="PRK14186.1"/>
    <property type="match status" value="1"/>
</dbReference>
<dbReference type="PANTHER" id="PTHR48099:SF5">
    <property type="entry name" value="C-1-TETRAHYDROFOLATE SYNTHASE, CYTOPLASMIC"/>
    <property type="match status" value="1"/>
</dbReference>
<dbReference type="PANTHER" id="PTHR48099">
    <property type="entry name" value="C-1-TETRAHYDROFOLATE SYNTHASE, CYTOPLASMIC-RELATED"/>
    <property type="match status" value="1"/>
</dbReference>
<dbReference type="Pfam" id="PF00763">
    <property type="entry name" value="THF_DHG_CYH"/>
    <property type="match status" value="1"/>
</dbReference>
<dbReference type="Pfam" id="PF02882">
    <property type="entry name" value="THF_DHG_CYH_C"/>
    <property type="match status" value="1"/>
</dbReference>
<dbReference type="PRINTS" id="PR00085">
    <property type="entry name" value="THFDHDRGNASE"/>
</dbReference>
<dbReference type="SUPFAM" id="SSF53223">
    <property type="entry name" value="Aminoacid dehydrogenase-like, N-terminal domain"/>
    <property type="match status" value="1"/>
</dbReference>
<dbReference type="SUPFAM" id="SSF51735">
    <property type="entry name" value="NAD(P)-binding Rossmann-fold domains"/>
    <property type="match status" value="1"/>
</dbReference>
<dbReference type="PROSITE" id="PS00767">
    <property type="entry name" value="THF_DHG_CYH_2"/>
    <property type="match status" value="1"/>
</dbReference>
<reference key="1">
    <citation type="journal article" date="2013" name="Plant Physiol.">
        <title>A Nostoc punctiforme Sugar Transporter Necessary to Establish a Cyanobacterium-Plant Symbiosis.</title>
        <authorList>
            <person name="Ekman M."/>
            <person name="Picossi S."/>
            <person name="Campbell E.L."/>
            <person name="Meeks J.C."/>
            <person name="Flores E."/>
        </authorList>
    </citation>
    <scope>NUCLEOTIDE SEQUENCE [LARGE SCALE GENOMIC DNA]</scope>
    <source>
        <strain>ATCC 29133 / PCC 73102</strain>
    </source>
</reference>
<gene>
    <name evidence="1" type="primary">folD</name>
    <name type="ordered locus">Npun_F3769</name>
</gene>
<accession>B2J442</accession>